<reference key="1">
    <citation type="journal article" date="1997" name="Microbiology">
        <title>Genomic rearrangements during evolution of the obligate intracellular parasite Rickettsia prowazekii as inferred from an analysis of 52015 bp nucleotide sequence.</title>
        <authorList>
            <person name="Andersson J.O."/>
            <person name="Andersson S.G.E."/>
        </authorList>
    </citation>
    <scope>NUCLEOTIDE SEQUENCE [GENOMIC DNA]</scope>
    <source>
        <strain>Madrid E</strain>
    </source>
</reference>
<reference key="2">
    <citation type="journal article" date="1998" name="Nature">
        <title>The genome sequence of Rickettsia prowazekii and the origin of mitochondria.</title>
        <authorList>
            <person name="Andersson S.G.E."/>
            <person name="Zomorodipour A."/>
            <person name="Andersson J.O."/>
            <person name="Sicheritz-Ponten T."/>
            <person name="Alsmark U.C.M."/>
            <person name="Podowski R.M."/>
            <person name="Naeslund A.K."/>
            <person name="Eriksson A.-S."/>
            <person name="Winkler H.H."/>
            <person name="Kurland C.G."/>
        </authorList>
    </citation>
    <scope>NUCLEOTIDE SEQUENCE [LARGE SCALE GENOMIC DNA]</scope>
    <source>
        <strain>Madrid E</strain>
    </source>
</reference>
<keyword id="KW-0028">Amino-acid biosynthesis</keyword>
<keyword id="KW-0963">Cytoplasm</keyword>
<keyword id="KW-0220">Diaminopimelate biosynthesis</keyword>
<keyword id="KW-0456">Lyase</keyword>
<keyword id="KW-0457">Lysine biosynthesis</keyword>
<keyword id="KW-1185">Reference proteome</keyword>
<keyword id="KW-0704">Schiff base</keyword>
<organism>
    <name type="scientific">Rickettsia prowazekii (strain Madrid E)</name>
    <dbReference type="NCBI Taxonomy" id="272947"/>
    <lineage>
        <taxon>Bacteria</taxon>
        <taxon>Pseudomonadati</taxon>
        <taxon>Pseudomonadota</taxon>
        <taxon>Alphaproteobacteria</taxon>
        <taxon>Rickettsiales</taxon>
        <taxon>Rickettsiaceae</taxon>
        <taxon>Rickettsieae</taxon>
        <taxon>Rickettsia</taxon>
        <taxon>typhus group</taxon>
    </lineage>
</organism>
<protein>
    <recommendedName>
        <fullName evidence="1">4-hydroxy-tetrahydrodipicolinate synthase</fullName>
        <shortName evidence="1">HTPA synthase</shortName>
        <ecNumber evidence="1">4.3.3.7</ecNumber>
    </recommendedName>
</protein>
<sequence>MYNIFKGLITALITPFKDNKLDLYALENILNQQIKHKIDAVLIAGSTGEANSLSFEEYKLLLKTSVDIVNNRMPIISGCSSNNTAYAIELAIESKKIGVDCFMASPPSYVKPTQHGIYKHFEALHEACNLPIMLYSAPTRSGVDFSDETILRLSKLPRILALKDCGVDLERPMRIRAIVKGDFNILTGNDEVVLAFHAQGVVGWISVTSNIAPKLCKELLEKWYNNDTQGALEIHQKLLPLYKALFLESNPIPVKYAAYYLGLCENEIRLPLTEASDSAKKQIKKIITSLSIKI</sequence>
<proteinExistence type="inferred from homology"/>
<gene>
    <name evidence="1" type="primary">dapA</name>
    <name type="ordered locus">RP429</name>
</gene>
<name>DAPA_RICPR</name>
<comment type="function">
    <text evidence="1">Catalyzes the condensation of (S)-aspartate-beta-semialdehyde [(S)-ASA] and pyruvate to 4-hydroxy-tetrahydrodipicolinate (HTPA).</text>
</comment>
<comment type="catalytic activity">
    <reaction evidence="1">
        <text>L-aspartate 4-semialdehyde + pyruvate = (2S,4S)-4-hydroxy-2,3,4,5-tetrahydrodipicolinate + H2O + H(+)</text>
        <dbReference type="Rhea" id="RHEA:34171"/>
        <dbReference type="ChEBI" id="CHEBI:15361"/>
        <dbReference type="ChEBI" id="CHEBI:15377"/>
        <dbReference type="ChEBI" id="CHEBI:15378"/>
        <dbReference type="ChEBI" id="CHEBI:67139"/>
        <dbReference type="ChEBI" id="CHEBI:537519"/>
        <dbReference type="EC" id="4.3.3.7"/>
    </reaction>
</comment>
<comment type="pathway">
    <text evidence="1">Amino-acid biosynthesis; L-lysine biosynthesis via DAP pathway; (S)-tetrahydrodipicolinate from L-aspartate: step 3/4.</text>
</comment>
<comment type="subunit">
    <text evidence="1">Homotetramer; dimer of dimers.</text>
</comment>
<comment type="subcellular location">
    <subcellularLocation>
        <location evidence="1">Cytoplasm</location>
    </subcellularLocation>
</comment>
<comment type="similarity">
    <text evidence="1">Belongs to the DapA family.</text>
</comment>
<comment type="caution">
    <text evidence="2">Was originally thought to be a dihydrodipicolinate synthase (DHDPS), catalyzing the condensation of (S)-aspartate-beta-semialdehyde [(S)-ASA] and pyruvate to dihydrodipicolinate (DHDP). However, it was shown in E.coli that the product of the enzymatic reaction is not dihydrodipicolinate but in fact (4S)-4-hydroxy-2,3,4,5-tetrahydro-(2S)-dipicolinic acid (HTPA), and that the consecutive dehydration reaction leading to DHDP is not spontaneous but catalyzed by DapB.</text>
</comment>
<accession>O05969</accession>
<dbReference type="EC" id="4.3.3.7" evidence="1"/>
<dbReference type="EMBL" id="Y11777">
    <property type="protein sequence ID" value="CAA72449.1"/>
    <property type="molecule type" value="Genomic_DNA"/>
</dbReference>
<dbReference type="EMBL" id="AJ235271">
    <property type="protein sequence ID" value="CAA14886.1"/>
    <property type="molecule type" value="Genomic_DNA"/>
</dbReference>
<dbReference type="PIR" id="D71701">
    <property type="entry name" value="D71701"/>
</dbReference>
<dbReference type="RefSeq" id="NP_220810.1">
    <property type="nucleotide sequence ID" value="NC_000963.1"/>
</dbReference>
<dbReference type="RefSeq" id="WP_004597637.1">
    <property type="nucleotide sequence ID" value="NC_000963.1"/>
</dbReference>
<dbReference type="SMR" id="O05969"/>
<dbReference type="STRING" id="272947.gene:17555509"/>
<dbReference type="EnsemblBacteria" id="CAA14886">
    <property type="protein sequence ID" value="CAA14886"/>
    <property type="gene ID" value="CAA14886"/>
</dbReference>
<dbReference type="GeneID" id="57569554"/>
<dbReference type="KEGG" id="rpr:RP429"/>
<dbReference type="PATRIC" id="fig|272947.5.peg.442"/>
<dbReference type="eggNOG" id="COG0329">
    <property type="taxonomic scope" value="Bacteria"/>
</dbReference>
<dbReference type="HOGENOM" id="CLU_049343_7_1_5"/>
<dbReference type="OrthoDB" id="9782828at2"/>
<dbReference type="UniPathway" id="UPA00034">
    <property type="reaction ID" value="UER00017"/>
</dbReference>
<dbReference type="Proteomes" id="UP000002480">
    <property type="component" value="Chromosome"/>
</dbReference>
<dbReference type="GO" id="GO:0005737">
    <property type="term" value="C:cytoplasm"/>
    <property type="evidence" value="ECO:0007669"/>
    <property type="project" value="UniProtKB-SubCell"/>
</dbReference>
<dbReference type="GO" id="GO:0008700">
    <property type="term" value="F:(R,S)-4-hydroxy-2-oxoglutarate aldolase activity"/>
    <property type="evidence" value="ECO:0007669"/>
    <property type="project" value="TreeGrafter"/>
</dbReference>
<dbReference type="GO" id="GO:0008840">
    <property type="term" value="F:4-hydroxy-tetrahydrodipicolinate synthase activity"/>
    <property type="evidence" value="ECO:0007669"/>
    <property type="project" value="UniProtKB-UniRule"/>
</dbReference>
<dbReference type="GO" id="GO:0019877">
    <property type="term" value="P:diaminopimelate biosynthetic process"/>
    <property type="evidence" value="ECO:0007669"/>
    <property type="project" value="UniProtKB-UniRule"/>
</dbReference>
<dbReference type="GO" id="GO:0009436">
    <property type="term" value="P:glyoxylate catabolic process"/>
    <property type="evidence" value="ECO:0007669"/>
    <property type="project" value="TreeGrafter"/>
</dbReference>
<dbReference type="GO" id="GO:0009089">
    <property type="term" value="P:lysine biosynthetic process via diaminopimelate"/>
    <property type="evidence" value="ECO:0007669"/>
    <property type="project" value="UniProtKB-UniRule"/>
</dbReference>
<dbReference type="CDD" id="cd00950">
    <property type="entry name" value="DHDPS"/>
    <property type="match status" value="1"/>
</dbReference>
<dbReference type="Gene3D" id="3.20.20.70">
    <property type="entry name" value="Aldolase class I"/>
    <property type="match status" value="1"/>
</dbReference>
<dbReference type="HAMAP" id="MF_00418">
    <property type="entry name" value="DapA"/>
    <property type="match status" value="1"/>
</dbReference>
<dbReference type="InterPro" id="IPR013785">
    <property type="entry name" value="Aldolase_TIM"/>
</dbReference>
<dbReference type="InterPro" id="IPR005263">
    <property type="entry name" value="DapA"/>
</dbReference>
<dbReference type="InterPro" id="IPR002220">
    <property type="entry name" value="DapA-like"/>
</dbReference>
<dbReference type="InterPro" id="IPR020625">
    <property type="entry name" value="Schiff_base-form_aldolases_AS"/>
</dbReference>
<dbReference type="InterPro" id="IPR020624">
    <property type="entry name" value="Schiff_base-form_aldolases_CS"/>
</dbReference>
<dbReference type="NCBIfam" id="TIGR00674">
    <property type="entry name" value="dapA"/>
    <property type="match status" value="1"/>
</dbReference>
<dbReference type="PANTHER" id="PTHR12128:SF66">
    <property type="entry name" value="4-HYDROXY-2-OXOGLUTARATE ALDOLASE, MITOCHONDRIAL"/>
    <property type="match status" value="1"/>
</dbReference>
<dbReference type="PANTHER" id="PTHR12128">
    <property type="entry name" value="DIHYDRODIPICOLINATE SYNTHASE"/>
    <property type="match status" value="1"/>
</dbReference>
<dbReference type="Pfam" id="PF00701">
    <property type="entry name" value="DHDPS"/>
    <property type="match status" value="1"/>
</dbReference>
<dbReference type="PIRSF" id="PIRSF001365">
    <property type="entry name" value="DHDPS"/>
    <property type="match status" value="1"/>
</dbReference>
<dbReference type="PRINTS" id="PR00146">
    <property type="entry name" value="DHPICSNTHASE"/>
</dbReference>
<dbReference type="SMART" id="SM01130">
    <property type="entry name" value="DHDPS"/>
    <property type="match status" value="1"/>
</dbReference>
<dbReference type="SUPFAM" id="SSF51569">
    <property type="entry name" value="Aldolase"/>
    <property type="match status" value="1"/>
</dbReference>
<dbReference type="PROSITE" id="PS00665">
    <property type="entry name" value="DHDPS_1"/>
    <property type="match status" value="1"/>
</dbReference>
<dbReference type="PROSITE" id="PS00666">
    <property type="entry name" value="DHDPS_2"/>
    <property type="match status" value="1"/>
</dbReference>
<feature type="chain" id="PRO_0000103146" description="4-hydroxy-tetrahydrodipicolinate synthase">
    <location>
        <begin position="1"/>
        <end position="294"/>
    </location>
</feature>
<feature type="active site" description="Proton donor/acceptor" evidence="1">
    <location>
        <position position="135"/>
    </location>
</feature>
<feature type="active site" description="Schiff-base intermediate with substrate" evidence="1">
    <location>
        <position position="163"/>
    </location>
</feature>
<feature type="binding site" evidence="1">
    <location>
        <position position="47"/>
    </location>
    <ligand>
        <name>pyruvate</name>
        <dbReference type="ChEBI" id="CHEBI:15361"/>
    </ligand>
</feature>
<feature type="binding site" evidence="1">
    <location>
        <position position="205"/>
    </location>
    <ligand>
        <name>pyruvate</name>
        <dbReference type="ChEBI" id="CHEBI:15361"/>
    </ligand>
</feature>
<feature type="site" description="Part of a proton relay during catalysis" evidence="1">
    <location>
        <position position="46"/>
    </location>
</feature>
<feature type="site" description="Part of a proton relay during catalysis" evidence="1">
    <location>
        <position position="109"/>
    </location>
</feature>
<evidence type="ECO:0000255" key="1">
    <source>
        <dbReference type="HAMAP-Rule" id="MF_00418"/>
    </source>
</evidence>
<evidence type="ECO:0000305" key="2"/>